<feature type="chain" id="PRO_1000054394" description="Type III pantothenate kinase">
    <location>
        <begin position="1"/>
        <end position="272"/>
    </location>
</feature>
<feature type="active site" description="Proton acceptor" evidence="1">
    <location>
        <position position="111"/>
    </location>
</feature>
<feature type="binding site" evidence="1">
    <location>
        <begin position="6"/>
        <end position="13"/>
    </location>
    <ligand>
        <name>ATP</name>
        <dbReference type="ChEBI" id="CHEBI:30616"/>
    </ligand>
</feature>
<feature type="binding site" evidence="1">
    <location>
        <begin position="109"/>
        <end position="112"/>
    </location>
    <ligand>
        <name>substrate</name>
    </ligand>
</feature>
<feature type="binding site" evidence="1">
    <location>
        <position position="131"/>
    </location>
    <ligand>
        <name>K(+)</name>
        <dbReference type="ChEBI" id="CHEBI:29103"/>
    </ligand>
</feature>
<feature type="binding site" evidence="1">
    <location>
        <position position="134"/>
    </location>
    <ligand>
        <name>ATP</name>
        <dbReference type="ChEBI" id="CHEBI:30616"/>
    </ligand>
</feature>
<feature type="binding site" evidence="1">
    <location>
        <position position="186"/>
    </location>
    <ligand>
        <name>substrate</name>
    </ligand>
</feature>
<sequence>MLLAIDVRNTHTVVGLLSGMKEHAKVVQQWRIRTESEVTADELALTIDGLIGEDSERLTGTAALSTVPSVLHEVRIMLDQYWPSVPHVLIEPGVRTGIPLLVDNPKEVGADRIVNCLAAYDRFRKAAIVVDFGSSICVDVVSAKGEFLGGAIAPGVQVSSDAAAARSAALRRVELARPRSVVGKNTVECMQAGAVFGFAGLVDGLVGRIREDVSGFSVDHDVAIVATGHTAPLLLPELHTVDHYDQHLTLQGLRLVFERNLEVQRGRLKTAR</sequence>
<reference key="1">
    <citation type="journal article" date="2008" name="PLoS ONE">
        <title>Genetic basis of virulence attenuation revealed by comparative genomic analysis of Mycobacterium tuberculosis strain H37Ra versus H37Rv.</title>
        <authorList>
            <person name="Zheng H."/>
            <person name="Lu L."/>
            <person name="Wang B."/>
            <person name="Pu S."/>
            <person name="Zhang X."/>
            <person name="Zhu G."/>
            <person name="Shi W."/>
            <person name="Zhang L."/>
            <person name="Wang H."/>
            <person name="Wang S."/>
            <person name="Zhao G."/>
            <person name="Zhang Y."/>
        </authorList>
    </citation>
    <scope>NUCLEOTIDE SEQUENCE [LARGE SCALE GENOMIC DNA]</scope>
    <source>
        <strain>ATCC 25177 / H37Ra</strain>
    </source>
</reference>
<gene>
    <name evidence="1" type="primary">coaX</name>
    <name type="ordered locus">MRA_3639</name>
</gene>
<proteinExistence type="inferred from homology"/>
<comment type="function">
    <text evidence="1">Catalyzes the phosphorylation of pantothenate (Pan), the first step in CoA biosynthesis.</text>
</comment>
<comment type="catalytic activity">
    <reaction evidence="1">
        <text>(R)-pantothenate + ATP = (R)-4'-phosphopantothenate + ADP + H(+)</text>
        <dbReference type="Rhea" id="RHEA:16373"/>
        <dbReference type="ChEBI" id="CHEBI:10986"/>
        <dbReference type="ChEBI" id="CHEBI:15378"/>
        <dbReference type="ChEBI" id="CHEBI:29032"/>
        <dbReference type="ChEBI" id="CHEBI:30616"/>
        <dbReference type="ChEBI" id="CHEBI:456216"/>
        <dbReference type="EC" id="2.7.1.33"/>
    </reaction>
</comment>
<comment type="cofactor">
    <cofactor evidence="1">
        <name>NH4(+)</name>
        <dbReference type="ChEBI" id="CHEBI:28938"/>
    </cofactor>
    <cofactor evidence="1">
        <name>K(+)</name>
        <dbReference type="ChEBI" id="CHEBI:29103"/>
    </cofactor>
    <text evidence="1">A monovalent cation. Ammonium or potassium.</text>
</comment>
<comment type="pathway">
    <text evidence="1">Cofactor biosynthesis; coenzyme A biosynthesis; CoA from (R)-pantothenate: step 1/5.</text>
</comment>
<comment type="subunit">
    <text evidence="1">Homodimer.</text>
</comment>
<comment type="subcellular location">
    <subcellularLocation>
        <location evidence="1">Cytoplasm</location>
    </subcellularLocation>
</comment>
<comment type="similarity">
    <text evidence="1">Belongs to the type III pantothenate kinase family.</text>
</comment>
<accession>A5U8S5</accession>
<protein>
    <recommendedName>
        <fullName evidence="1">Type III pantothenate kinase</fullName>
        <ecNumber evidence="1">2.7.1.33</ecNumber>
    </recommendedName>
    <alternativeName>
        <fullName evidence="1">PanK-III</fullName>
    </alternativeName>
    <alternativeName>
        <fullName evidence="1">Pantothenic acid kinase</fullName>
    </alternativeName>
</protein>
<evidence type="ECO:0000255" key="1">
    <source>
        <dbReference type="HAMAP-Rule" id="MF_01274"/>
    </source>
</evidence>
<name>COAX_MYCTA</name>
<keyword id="KW-0067">ATP-binding</keyword>
<keyword id="KW-0173">Coenzyme A biosynthesis</keyword>
<keyword id="KW-0963">Cytoplasm</keyword>
<keyword id="KW-0418">Kinase</keyword>
<keyword id="KW-0479">Metal-binding</keyword>
<keyword id="KW-0547">Nucleotide-binding</keyword>
<keyword id="KW-0630">Potassium</keyword>
<keyword id="KW-1185">Reference proteome</keyword>
<keyword id="KW-0808">Transferase</keyword>
<organism>
    <name type="scientific">Mycobacterium tuberculosis (strain ATCC 25177 / H37Ra)</name>
    <dbReference type="NCBI Taxonomy" id="419947"/>
    <lineage>
        <taxon>Bacteria</taxon>
        <taxon>Bacillati</taxon>
        <taxon>Actinomycetota</taxon>
        <taxon>Actinomycetes</taxon>
        <taxon>Mycobacteriales</taxon>
        <taxon>Mycobacteriaceae</taxon>
        <taxon>Mycobacterium</taxon>
        <taxon>Mycobacterium tuberculosis complex</taxon>
    </lineage>
</organism>
<dbReference type="EC" id="2.7.1.33" evidence="1"/>
<dbReference type="EMBL" id="CP000611">
    <property type="protein sequence ID" value="ABQ75425.1"/>
    <property type="molecule type" value="Genomic_DNA"/>
</dbReference>
<dbReference type="RefSeq" id="WP_003419517.1">
    <property type="nucleotide sequence ID" value="NZ_CP016972.1"/>
</dbReference>
<dbReference type="SMR" id="A5U8S5"/>
<dbReference type="KEGG" id="mra:MRA_3639"/>
<dbReference type="eggNOG" id="COG1521">
    <property type="taxonomic scope" value="Bacteria"/>
</dbReference>
<dbReference type="HOGENOM" id="CLU_066627_1_0_11"/>
<dbReference type="UniPathway" id="UPA00241">
    <property type="reaction ID" value="UER00352"/>
</dbReference>
<dbReference type="Proteomes" id="UP000001988">
    <property type="component" value="Chromosome"/>
</dbReference>
<dbReference type="GO" id="GO:0005737">
    <property type="term" value="C:cytoplasm"/>
    <property type="evidence" value="ECO:0007669"/>
    <property type="project" value="UniProtKB-SubCell"/>
</dbReference>
<dbReference type="GO" id="GO:0005524">
    <property type="term" value="F:ATP binding"/>
    <property type="evidence" value="ECO:0007669"/>
    <property type="project" value="UniProtKB-UniRule"/>
</dbReference>
<dbReference type="GO" id="GO:0046872">
    <property type="term" value="F:metal ion binding"/>
    <property type="evidence" value="ECO:0007669"/>
    <property type="project" value="UniProtKB-KW"/>
</dbReference>
<dbReference type="GO" id="GO:0004594">
    <property type="term" value="F:pantothenate kinase activity"/>
    <property type="evidence" value="ECO:0007669"/>
    <property type="project" value="UniProtKB-UniRule"/>
</dbReference>
<dbReference type="GO" id="GO:0015937">
    <property type="term" value="P:coenzyme A biosynthetic process"/>
    <property type="evidence" value="ECO:0007669"/>
    <property type="project" value="UniProtKB-UniRule"/>
</dbReference>
<dbReference type="CDD" id="cd24015">
    <property type="entry name" value="ASKHA_NBD_PanK-III"/>
    <property type="match status" value="1"/>
</dbReference>
<dbReference type="FunFam" id="3.30.420.40:FF:000146">
    <property type="entry name" value="Type III pantothenate kinase"/>
    <property type="match status" value="1"/>
</dbReference>
<dbReference type="FunFam" id="3.30.420.40:FF:000223">
    <property type="entry name" value="Type III pantothenate kinase"/>
    <property type="match status" value="1"/>
</dbReference>
<dbReference type="Gene3D" id="3.30.420.40">
    <property type="match status" value="2"/>
</dbReference>
<dbReference type="HAMAP" id="MF_01274">
    <property type="entry name" value="Pantothen_kinase_3"/>
    <property type="match status" value="1"/>
</dbReference>
<dbReference type="InterPro" id="IPR043129">
    <property type="entry name" value="ATPase_NBD"/>
</dbReference>
<dbReference type="InterPro" id="IPR004619">
    <property type="entry name" value="Type_III_PanK"/>
</dbReference>
<dbReference type="NCBIfam" id="TIGR00671">
    <property type="entry name" value="baf"/>
    <property type="match status" value="1"/>
</dbReference>
<dbReference type="NCBIfam" id="NF009845">
    <property type="entry name" value="PRK13318.1-3"/>
    <property type="match status" value="1"/>
</dbReference>
<dbReference type="PANTHER" id="PTHR34265">
    <property type="entry name" value="TYPE III PANTOTHENATE KINASE"/>
    <property type="match status" value="1"/>
</dbReference>
<dbReference type="PANTHER" id="PTHR34265:SF1">
    <property type="entry name" value="TYPE III PANTOTHENATE KINASE"/>
    <property type="match status" value="1"/>
</dbReference>
<dbReference type="Pfam" id="PF03309">
    <property type="entry name" value="Pan_kinase"/>
    <property type="match status" value="1"/>
</dbReference>
<dbReference type="SUPFAM" id="SSF53067">
    <property type="entry name" value="Actin-like ATPase domain"/>
    <property type="match status" value="2"/>
</dbReference>